<keyword id="KW-0963">Cytoplasm</keyword>
<keyword id="KW-0378">Hydrolase</keyword>
<keyword id="KW-1185">Reference proteome</keyword>
<keyword id="KW-0694">RNA-binding</keyword>
<keyword id="KW-0820">tRNA-binding</keyword>
<feature type="chain" id="PRO_1000146211" description="D-aminoacyl-tRNA deacylase">
    <location>
        <begin position="1"/>
        <end position="150"/>
    </location>
</feature>
<feature type="short sequence motif" description="Gly-cisPro motif, important for rejection of L-amino acids" evidence="1">
    <location>
        <begin position="136"/>
        <end position="137"/>
    </location>
</feature>
<protein>
    <recommendedName>
        <fullName evidence="1">D-aminoacyl-tRNA deacylase</fullName>
        <shortName evidence="1">DTD</shortName>
        <ecNumber evidence="1">3.1.1.96</ecNumber>
    </recommendedName>
    <alternativeName>
        <fullName evidence="1">Gly-tRNA(Ala) deacylase</fullName>
    </alternativeName>
</protein>
<sequence length="150" mass="16361">MKIVVQRVKQASVTNESIHEEIGKGLCLLVGVGQDSTEKDVEAVAKKIVNARIFEDENGKLNLNVQQVGGAILSISQFTLYADVKKGNRPGFTNSKPPEEANRLYEAFNEALCQYGVEVKTGEFGTDMLVDIANDGPVTIIYESQDGKII</sequence>
<reference key="1">
    <citation type="journal article" date="2009" name="Appl. Environ. Microbiol.">
        <title>Genome analysis of the meat starter culture bacterium Staphylococcus carnosus TM300.</title>
        <authorList>
            <person name="Rosenstein R."/>
            <person name="Nerz C."/>
            <person name="Biswas L."/>
            <person name="Resch A."/>
            <person name="Raddatz G."/>
            <person name="Schuster S.C."/>
            <person name="Goetz F."/>
        </authorList>
    </citation>
    <scope>NUCLEOTIDE SEQUENCE [LARGE SCALE GENOMIC DNA]</scope>
    <source>
        <strain>TM300</strain>
    </source>
</reference>
<gene>
    <name evidence="1" type="primary">dtd</name>
    <name type="ordered locus">Sca_1244</name>
</gene>
<comment type="function">
    <text evidence="1">An aminoacyl-tRNA editing enzyme that deacylates mischarged D-aminoacyl-tRNAs. Also deacylates mischarged glycyl-tRNA(Ala), protecting cells against glycine mischarging by AlaRS. Acts via tRNA-based rather than protein-based catalysis; rejects L-amino acids rather than detecting D-amino acids in the active site. By recycling D-aminoacyl-tRNA to D-amino acids and free tRNA molecules, this enzyme counteracts the toxicity associated with the formation of D-aminoacyl-tRNA entities in vivo and helps enforce protein L-homochirality.</text>
</comment>
<comment type="catalytic activity">
    <reaction evidence="1">
        <text>glycyl-tRNA(Ala) + H2O = tRNA(Ala) + glycine + H(+)</text>
        <dbReference type="Rhea" id="RHEA:53744"/>
        <dbReference type="Rhea" id="RHEA-COMP:9657"/>
        <dbReference type="Rhea" id="RHEA-COMP:13640"/>
        <dbReference type="ChEBI" id="CHEBI:15377"/>
        <dbReference type="ChEBI" id="CHEBI:15378"/>
        <dbReference type="ChEBI" id="CHEBI:57305"/>
        <dbReference type="ChEBI" id="CHEBI:78442"/>
        <dbReference type="ChEBI" id="CHEBI:78522"/>
        <dbReference type="EC" id="3.1.1.96"/>
    </reaction>
</comment>
<comment type="catalytic activity">
    <reaction evidence="1">
        <text>a D-aminoacyl-tRNA + H2O = a tRNA + a D-alpha-amino acid + H(+)</text>
        <dbReference type="Rhea" id="RHEA:13953"/>
        <dbReference type="Rhea" id="RHEA-COMP:10123"/>
        <dbReference type="Rhea" id="RHEA-COMP:10124"/>
        <dbReference type="ChEBI" id="CHEBI:15377"/>
        <dbReference type="ChEBI" id="CHEBI:15378"/>
        <dbReference type="ChEBI" id="CHEBI:59871"/>
        <dbReference type="ChEBI" id="CHEBI:78442"/>
        <dbReference type="ChEBI" id="CHEBI:79333"/>
        <dbReference type="EC" id="3.1.1.96"/>
    </reaction>
</comment>
<comment type="subunit">
    <text evidence="1">Homodimer.</text>
</comment>
<comment type="subcellular location">
    <subcellularLocation>
        <location evidence="1">Cytoplasm</location>
    </subcellularLocation>
</comment>
<comment type="domain">
    <text evidence="1">A Gly-cisPro motif from one monomer fits into the active site of the other monomer to allow specific chiral rejection of L-amino acids.</text>
</comment>
<comment type="similarity">
    <text evidence="1">Belongs to the DTD family.</text>
</comment>
<proteinExistence type="inferred from homology"/>
<dbReference type="EC" id="3.1.1.96" evidence="1"/>
<dbReference type="EMBL" id="AM295250">
    <property type="protein sequence ID" value="CAL28151.1"/>
    <property type="molecule type" value="Genomic_DNA"/>
</dbReference>
<dbReference type="RefSeq" id="WP_015900491.1">
    <property type="nucleotide sequence ID" value="NC_012121.1"/>
</dbReference>
<dbReference type="SMR" id="B9DNG1"/>
<dbReference type="GeneID" id="93793670"/>
<dbReference type="KEGG" id="sca:SCA_1244"/>
<dbReference type="eggNOG" id="COG1490">
    <property type="taxonomic scope" value="Bacteria"/>
</dbReference>
<dbReference type="HOGENOM" id="CLU_076901_1_0_9"/>
<dbReference type="OrthoDB" id="9801395at2"/>
<dbReference type="BioCyc" id="SCAR396513:SCA_RS06220-MONOMER"/>
<dbReference type="Proteomes" id="UP000000444">
    <property type="component" value="Chromosome"/>
</dbReference>
<dbReference type="GO" id="GO:0005737">
    <property type="term" value="C:cytoplasm"/>
    <property type="evidence" value="ECO:0007669"/>
    <property type="project" value="UniProtKB-SubCell"/>
</dbReference>
<dbReference type="GO" id="GO:0051500">
    <property type="term" value="F:D-tyrosyl-tRNA(Tyr) deacylase activity"/>
    <property type="evidence" value="ECO:0007669"/>
    <property type="project" value="TreeGrafter"/>
</dbReference>
<dbReference type="GO" id="GO:0106026">
    <property type="term" value="F:Gly-tRNA(Ala) deacylase activity"/>
    <property type="evidence" value="ECO:0007669"/>
    <property type="project" value="UniProtKB-UniRule"/>
</dbReference>
<dbReference type="GO" id="GO:0043908">
    <property type="term" value="F:Ser(Gly)-tRNA(Ala) hydrolase activity"/>
    <property type="evidence" value="ECO:0007669"/>
    <property type="project" value="UniProtKB-UniRule"/>
</dbReference>
<dbReference type="GO" id="GO:0000049">
    <property type="term" value="F:tRNA binding"/>
    <property type="evidence" value="ECO:0007669"/>
    <property type="project" value="UniProtKB-UniRule"/>
</dbReference>
<dbReference type="GO" id="GO:0019478">
    <property type="term" value="P:D-amino acid catabolic process"/>
    <property type="evidence" value="ECO:0007669"/>
    <property type="project" value="UniProtKB-UniRule"/>
</dbReference>
<dbReference type="FunFam" id="3.50.80.10:FF:000001">
    <property type="entry name" value="D-aminoacyl-tRNA deacylase"/>
    <property type="match status" value="1"/>
</dbReference>
<dbReference type="Gene3D" id="3.50.80.10">
    <property type="entry name" value="D-tyrosyl-tRNA(Tyr) deacylase"/>
    <property type="match status" value="1"/>
</dbReference>
<dbReference type="HAMAP" id="MF_00518">
    <property type="entry name" value="Deacylase_Dtd"/>
    <property type="match status" value="1"/>
</dbReference>
<dbReference type="InterPro" id="IPR003732">
    <property type="entry name" value="Daa-tRNA_deacyls_DTD"/>
</dbReference>
<dbReference type="InterPro" id="IPR023509">
    <property type="entry name" value="DTD-like_sf"/>
</dbReference>
<dbReference type="NCBIfam" id="TIGR00256">
    <property type="entry name" value="D-aminoacyl-tRNA deacylase"/>
    <property type="match status" value="1"/>
</dbReference>
<dbReference type="PANTHER" id="PTHR10472:SF5">
    <property type="entry name" value="D-AMINOACYL-TRNA DEACYLASE 1"/>
    <property type="match status" value="1"/>
</dbReference>
<dbReference type="PANTHER" id="PTHR10472">
    <property type="entry name" value="D-TYROSYL-TRNA TYR DEACYLASE"/>
    <property type="match status" value="1"/>
</dbReference>
<dbReference type="Pfam" id="PF02580">
    <property type="entry name" value="Tyr_Deacylase"/>
    <property type="match status" value="1"/>
</dbReference>
<dbReference type="SUPFAM" id="SSF69500">
    <property type="entry name" value="DTD-like"/>
    <property type="match status" value="1"/>
</dbReference>
<name>DTD_STACT</name>
<accession>B9DNG1</accession>
<organism>
    <name type="scientific">Staphylococcus carnosus (strain TM300)</name>
    <dbReference type="NCBI Taxonomy" id="396513"/>
    <lineage>
        <taxon>Bacteria</taxon>
        <taxon>Bacillati</taxon>
        <taxon>Bacillota</taxon>
        <taxon>Bacilli</taxon>
        <taxon>Bacillales</taxon>
        <taxon>Staphylococcaceae</taxon>
        <taxon>Staphylococcus</taxon>
    </lineage>
</organism>
<evidence type="ECO:0000255" key="1">
    <source>
        <dbReference type="HAMAP-Rule" id="MF_00518"/>
    </source>
</evidence>